<comment type="subunit">
    <text evidence="1">Part of the 50S ribosomal subunit.</text>
</comment>
<comment type="similarity">
    <text evidence="1">Belongs to the universal ribosomal protein uL30 family.</text>
</comment>
<feature type="chain" id="PRO_1000056104" description="Large ribosomal subunit protein uL30">
    <location>
        <begin position="1"/>
        <end position="59"/>
    </location>
</feature>
<accession>A1S236</accession>
<keyword id="KW-1185">Reference proteome</keyword>
<keyword id="KW-0687">Ribonucleoprotein</keyword>
<keyword id="KW-0689">Ribosomal protein</keyword>
<gene>
    <name evidence="1" type="primary">rpmD</name>
    <name type="ordered locus">Sama_0231</name>
</gene>
<sequence>MAKTIKVTQTKSAIGRLPKHKATLTGLGLRRIGHTVELEDTPAVRGMINKVYYMVKVED</sequence>
<dbReference type="EMBL" id="CP000507">
    <property type="protein sequence ID" value="ABL98442.1"/>
    <property type="molecule type" value="Genomic_DNA"/>
</dbReference>
<dbReference type="RefSeq" id="WP_011758352.1">
    <property type="nucleotide sequence ID" value="NC_008700.1"/>
</dbReference>
<dbReference type="SMR" id="A1S236"/>
<dbReference type="STRING" id="326297.Sama_0231"/>
<dbReference type="KEGG" id="saz:Sama_0231"/>
<dbReference type="eggNOG" id="COG1841">
    <property type="taxonomic scope" value="Bacteria"/>
</dbReference>
<dbReference type="HOGENOM" id="CLU_131047_1_4_6"/>
<dbReference type="OrthoDB" id="9812790at2"/>
<dbReference type="Proteomes" id="UP000009175">
    <property type="component" value="Chromosome"/>
</dbReference>
<dbReference type="GO" id="GO:0022625">
    <property type="term" value="C:cytosolic large ribosomal subunit"/>
    <property type="evidence" value="ECO:0007669"/>
    <property type="project" value="TreeGrafter"/>
</dbReference>
<dbReference type="GO" id="GO:0003735">
    <property type="term" value="F:structural constituent of ribosome"/>
    <property type="evidence" value="ECO:0007669"/>
    <property type="project" value="InterPro"/>
</dbReference>
<dbReference type="GO" id="GO:0006412">
    <property type="term" value="P:translation"/>
    <property type="evidence" value="ECO:0007669"/>
    <property type="project" value="UniProtKB-UniRule"/>
</dbReference>
<dbReference type="CDD" id="cd01658">
    <property type="entry name" value="Ribosomal_L30"/>
    <property type="match status" value="1"/>
</dbReference>
<dbReference type="FunFam" id="3.30.1390.20:FF:000001">
    <property type="entry name" value="50S ribosomal protein L30"/>
    <property type="match status" value="1"/>
</dbReference>
<dbReference type="Gene3D" id="3.30.1390.20">
    <property type="entry name" value="Ribosomal protein L30, ferredoxin-like fold domain"/>
    <property type="match status" value="1"/>
</dbReference>
<dbReference type="HAMAP" id="MF_01371_B">
    <property type="entry name" value="Ribosomal_uL30_B"/>
    <property type="match status" value="1"/>
</dbReference>
<dbReference type="InterPro" id="IPR036919">
    <property type="entry name" value="Ribo_uL30_ferredoxin-like_sf"/>
</dbReference>
<dbReference type="InterPro" id="IPR005996">
    <property type="entry name" value="Ribosomal_uL30_bac-type"/>
</dbReference>
<dbReference type="InterPro" id="IPR018038">
    <property type="entry name" value="Ribosomal_uL30_CS"/>
</dbReference>
<dbReference type="InterPro" id="IPR016082">
    <property type="entry name" value="Ribosomal_uL30_ferredoxin-like"/>
</dbReference>
<dbReference type="NCBIfam" id="TIGR01308">
    <property type="entry name" value="rpmD_bact"/>
    <property type="match status" value="1"/>
</dbReference>
<dbReference type="PANTHER" id="PTHR15892:SF2">
    <property type="entry name" value="LARGE RIBOSOMAL SUBUNIT PROTEIN UL30M"/>
    <property type="match status" value="1"/>
</dbReference>
<dbReference type="PANTHER" id="PTHR15892">
    <property type="entry name" value="MITOCHONDRIAL RIBOSOMAL PROTEIN L30"/>
    <property type="match status" value="1"/>
</dbReference>
<dbReference type="Pfam" id="PF00327">
    <property type="entry name" value="Ribosomal_L30"/>
    <property type="match status" value="1"/>
</dbReference>
<dbReference type="PIRSF" id="PIRSF002211">
    <property type="entry name" value="Ribosomal_L30_bac-type"/>
    <property type="match status" value="1"/>
</dbReference>
<dbReference type="SUPFAM" id="SSF55129">
    <property type="entry name" value="Ribosomal protein L30p/L7e"/>
    <property type="match status" value="1"/>
</dbReference>
<dbReference type="PROSITE" id="PS00634">
    <property type="entry name" value="RIBOSOMAL_L30"/>
    <property type="match status" value="1"/>
</dbReference>
<protein>
    <recommendedName>
        <fullName evidence="1">Large ribosomal subunit protein uL30</fullName>
    </recommendedName>
    <alternativeName>
        <fullName evidence="2">50S ribosomal protein L30</fullName>
    </alternativeName>
</protein>
<name>RL30_SHEAM</name>
<organism>
    <name type="scientific">Shewanella amazonensis (strain ATCC BAA-1098 / SB2B)</name>
    <dbReference type="NCBI Taxonomy" id="326297"/>
    <lineage>
        <taxon>Bacteria</taxon>
        <taxon>Pseudomonadati</taxon>
        <taxon>Pseudomonadota</taxon>
        <taxon>Gammaproteobacteria</taxon>
        <taxon>Alteromonadales</taxon>
        <taxon>Shewanellaceae</taxon>
        <taxon>Shewanella</taxon>
    </lineage>
</organism>
<evidence type="ECO:0000255" key="1">
    <source>
        <dbReference type="HAMAP-Rule" id="MF_01371"/>
    </source>
</evidence>
<evidence type="ECO:0000305" key="2"/>
<reference key="1">
    <citation type="submission" date="2006-12" db="EMBL/GenBank/DDBJ databases">
        <title>Complete sequence of Shewanella amazonensis SB2B.</title>
        <authorList>
            <consortium name="US DOE Joint Genome Institute"/>
            <person name="Copeland A."/>
            <person name="Lucas S."/>
            <person name="Lapidus A."/>
            <person name="Barry K."/>
            <person name="Detter J.C."/>
            <person name="Glavina del Rio T."/>
            <person name="Hammon N."/>
            <person name="Israni S."/>
            <person name="Dalin E."/>
            <person name="Tice H."/>
            <person name="Pitluck S."/>
            <person name="Munk A.C."/>
            <person name="Brettin T."/>
            <person name="Bruce D."/>
            <person name="Han C."/>
            <person name="Tapia R."/>
            <person name="Gilna P."/>
            <person name="Schmutz J."/>
            <person name="Larimer F."/>
            <person name="Land M."/>
            <person name="Hauser L."/>
            <person name="Kyrpides N."/>
            <person name="Mikhailova N."/>
            <person name="Fredrickson J."/>
            <person name="Richardson P."/>
        </authorList>
    </citation>
    <scope>NUCLEOTIDE SEQUENCE [LARGE SCALE GENOMIC DNA]</scope>
    <source>
        <strain>ATCC BAA-1098 / SB2B</strain>
    </source>
</reference>
<proteinExistence type="inferred from homology"/>